<accession>Q49W01</accession>
<feature type="chain" id="PRO_0000307570" description="Triosephosphate isomerase">
    <location>
        <begin position="1"/>
        <end position="253"/>
    </location>
</feature>
<feature type="active site" description="Electrophile" evidence="1">
    <location>
        <position position="97"/>
    </location>
</feature>
<feature type="active site" description="Proton acceptor" evidence="1">
    <location>
        <position position="169"/>
    </location>
</feature>
<feature type="binding site" evidence="1">
    <location>
        <begin position="9"/>
        <end position="11"/>
    </location>
    <ligand>
        <name>substrate</name>
    </ligand>
</feature>
<feature type="binding site" evidence="1">
    <location>
        <position position="175"/>
    </location>
    <ligand>
        <name>substrate</name>
    </ligand>
</feature>
<feature type="binding site" evidence="1">
    <location>
        <position position="215"/>
    </location>
    <ligand>
        <name>substrate</name>
    </ligand>
</feature>
<feature type="binding site" evidence="1">
    <location>
        <begin position="236"/>
        <end position="237"/>
    </location>
    <ligand>
        <name>substrate</name>
    </ligand>
</feature>
<evidence type="ECO:0000255" key="1">
    <source>
        <dbReference type="HAMAP-Rule" id="MF_00147"/>
    </source>
</evidence>
<dbReference type="EC" id="5.3.1.1" evidence="1"/>
<dbReference type="EMBL" id="AP008934">
    <property type="protein sequence ID" value="BAE19059.1"/>
    <property type="molecule type" value="Genomic_DNA"/>
</dbReference>
<dbReference type="RefSeq" id="WP_011303587.1">
    <property type="nucleotide sequence ID" value="NZ_MTGA01000039.1"/>
</dbReference>
<dbReference type="SMR" id="Q49W01"/>
<dbReference type="GeneID" id="3615268"/>
<dbReference type="KEGG" id="ssp:SSP1914"/>
<dbReference type="PATRIC" id="fig|342451.11.peg.1908"/>
<dbReference type="eggNOG" id="COG0149">
    <property type="taxonomic scope" value="Bacteria"/>
</dbReference>
<dbReference type="HOGENOM" id="CLU_024251_2_3_9"/>
<dbReference type="OrthoDB" id="9809429at2"/>
<dbReference type="UniPathway" id="UPA00109">
    <property type="reaction ID" value="UER00189"/>
</dbReference>
<dbReference type="UniPathway" id="UPA00138"/>
<dbReference type="Proteomes" id="UP000006371">
    <property type="component" value="Chromosome"/>
</dbReference>
<dbReference type="GO" id="GO:0005829">
    <property type="term" value="C:cytosol"/>
    <property type="evidence" value="ECO:0007669"/>
    <property type="project" value="TreeGrafter"/>
</dbReference>
<dbReference type="GO" id="GO:0004807">
    <property type="term" value="F:triose-phosphate isomerase activity"/>
    <property type="evidence" value="ECO:0007669"/>
    <property type="project" value="UniProtKB-UniRule"/>
</dbReference>
<dbReference type="GO" id="GO:0006094">
    <property type="term" value="P:gluconeogenesis"/>
    <property type="evidence" value="ECO:0007669"/>
    <property type="project" value="UniProtKB-UniRule"/>
</dbReference>
<dbReference type="GO" id="GO:0046166">
    <property type="term" value="P:glyceraldehyde-3-phosphate biosynthetic process"/>
    <property type="evidence" value="ECO:0007669"/>
    <property type="project" value="TreeGrafter"/>
</dbReference>
<dbReference type="GO" id="GO:0019563">
    <property type="term" value="P:glycerol catabolic process"/>
    <property type="evidence" value="ECO:0007669"/>
    <property type="project" value="TreeGrafter"/>
</dbReference>
<dbReference type="GO" id="GO:0006096">
    <property type="term" value="P:glycolytic process"/>
    <property type="evidence" value="ECO:0007669"/>
    <property type="project" value="UniProtKB-UniRule"/>
</dbReference>
<dbReference type="CDD" id="cd00311">
    <property type="entry name" value="TIM"/>
    <property type="match status" value="1"/>
</dbReference>
<dbReference type="FunFam" id="3.20.20.70:FF:000016">
    <property type="entry name" value="Triosephosphate isomerase"/>
    <property type="match status" value="1"/>
</dbReference>
<dbReference type="Gene3D" id="3.20.20.70">
    <property type="entry name" value="Aldolase class I"/>
    <property type="match status" value="1"/>
</dbReference>
<dbReference type="HAMAP" id="MF_00147_B">
    <property type="entry name" value="TIM_B"/>
    <property type="match status" value="1"/>
</dbReference>
<dbReference type="InterPro" id="IPR013785">
    <property type="entry name" value="Aldolase_TIM"/>
</dbReference>
<dbReference type="InterPro" id="IPR035990">
    <property type="entry name" value="TIM_sf"/>
</dbReference>
<dbReference type="InterPro" id="IPR022896">
    <property type="entry name" value="TrioseP_Isoase_bac/euk"/>
</dbReference>
<dbReference type="InterPro" id="IPR000652">
    <property type="entry name" value="Triosephosphate_isomerase"/>
</dbReference>
<dbReference type="InterPro" id="IPR020861">
    <property type="entry name" value="Triosephosphate_isomerase_AS"/>
</dbReference>
<dbReference type="NCBIfam" id="TIGR00419">
    <property type="entry name" value="tim"/>
    <property type="match status" value="1"/>
</dbReference>
<dbReference type="PANTHER" id="PTHR21139">
    <property type="entry name" value="TRIOSEPHOSPHATE ISOMERASE"/>
    <property type="match status" value="1"/>
</dbReference>
<dbReference type="PANTHER" id="PTHR21139:SF42">
    <property type="entry name" value="TRIOSEPHOSPHATE ISOMERASE"/>
    <property type="match status" value="1"/>
</dbReference>
<dbReference type="Pfam" id="PF00121">
    <property type="entry name" value="TIM"/>
    <property type="match status" value="1"/>
</dbReference>
<dbReference type="SUPFAM" id="SSF51351">
    <property type="entry name" value="Triosephosphate isomerase (TIM)"/>
    <property type="match status" value="1"/>
</dbReference>
<dbReference type="PROSITE" id="PS00171">
    <property type="entry name" value="TIM_1"/>
    <property type="match status" value="1"/>
</dbReference>
<dbReference type="PROSITE" id="PS51440">
    <property type="entry name" value="TIM_2"/>
    <property type="match status" value="1"/>
</dbReference>
<sequence>MRKPIIAGNWKMNKTVKEAKDFINELPTLPDTKEVESVICAPTIQLDALVTLVNDGKAKGLQIGAQNAYFEDNGAFTGETSPVALADLGVKYVVIGHSERREIFHETDEEINKKAHAIFNHGMTPIVCVGETDEERESGKANEVVGNQVKKAVEGLSEAQLQQLVIAYEPIWAIGTGKSSTAKDANEMCAFVRQTVAELSSQTVADATRIQYGGSVKPNNIKEYMAESDIDGALVGGASLKVDDFVQLLEGAK</sequence>
<proteinExistence type="inferred from homology"/>
<keyword id="KW-0963">Cytoplasm</keyword>
<keyword id="KW-0312">Gluconeogenesis</keyword>
<keyword id="KW-0324">Glycolysis</keyword>
<keyword id="KW-0413">Isomerase</keyword>
<keyword id="KW-1185">Reference proteome</keyword>
<gene>
    <name evidence="1" type="primary">tpiA</name>
    <name type="ordered locus">SSP1914</name>
</gene>
<comment type="function">
    <text evidence="1">Involved in the gluconeogenesis. Catalyzes stereospecifically the conversion of dihydroxyacetone phosphate (DHAP) to D-glyceraldehyde-3-phosphate (G3P).</text>
</comment>
<comment type="catalytic activity">
    <reaction evidence="1">
        <text>D-glyceraldehyde 3-phosphate = dihydroxyacetone phosphate</text>
        <dbReference type="Rhea" id="RHEA:18585"/>
        <dbReference type="ChEBI" id="CHEBI:57642"/>
        <dbReference type="ChEBI" id="CHEBI:59776"/>
        <dbReference type="EC" id="5.3.1.1"/>
    </reaction>
</comment>
<comment type="pathway">
    <text evidence="1">Carbohydrate biosynthesis; gluconeogenesis.</text>
</comment>
<comment type="pathway">
    <text evidence="1">Carbohydrate degradation; glycolysis; D-glyceraldehyde 3-phosphate from glycerone phosphate: step 1/1.</text>
</comment>
<comment type="subunit">
    <text evidence="1">Homodimer.</text>
</comment>
<comment type="subcellular location">
    <subcellularLocation>
        <location evidence="1">Cytoplasm</location>
    </subcellularLocation>
</comment>
<comment type="similarity">
    <text evidence="1">Belongs to the triosephosphate isomerase family.</text>
</comment>
<reference key="1">
    <citation type="journal article" date="2005" name="Proc. Natl. Acad. Sci. U.S.A.">
        <title>Whole genome sequence of Staphylococcus saprophyticus reveals the pathogenesis of uncomplicated urinary tract infection.</title>
        <authorList>
            <person name="Kuroda M."/>
            <person name="Yamashita A."/>
            <person name="Hirakawa H."/>
            <person name="Kumano M."/>
            <person name="Morikawa K."/>
            <person name="Higashide M."/>
            <person name="Maruyama A."/>
            <person name="Inose Y."/>
            <person name="Matoba K."/>
            <person name="Toh H."/>
            <person name="Kuhara S."/>
            <person name="Hattori M."/>
            <person name="Ohta T."/>
        </authorList>
    </citation>
    <scope>NUCLEOTIDE SEQUENCE [LARGE SCALE GENOMIC DNA]</scope>
    <source>
        <strain>ATCC 15305 / DSM 20229 / NCIMB 8711 / NCTC 7292 / S-41</strain>
    </source>
</reference>
<name>TPIS_STAS1</name>
<protein>
    <recommendedName>
        <fullName evidence="1">Triosephosphate isomerase</fullName>
        <shortName evidence="1">TIM</shortName>
        <shortName evidence="1">TPI</shortName>
        <ecNumber evidence="1">5.3.1.1</ecNumber>
    </recommendedName>
    <alternativeName>
        <fullName evidence="1">Triose-phosphate isomerase</fullName>
    </alternativeName>
</protein>
<organism>
    <name type="scientific">Staphylococcus saprophyticus subsp. saprophyticus (strain ATCC 15305 / DSM 20229 / NCIMB 8711 / NCTC 7292 / S-41)</name>
    <dbReference type="NCBI Taxonomy" id="342451"/>
    <lineage>
        <taxon>Bacteria</taxon>
        <taxon>Bacillati</taxon>
        <taxon>Bacillota</taxon>
        <taxon>Bacilli</taxon>
        <taxon>Bacillales</taxon>
        <taxon>Staphylococcaceae</taxon>
        <taxon>Staphylococcus</taxon>
    </lineage>
</organism>